<reference key="1">
    <citation type="journal article" date="2000" name="Nature">
        <title>Sequence and analysis of chromosome 3 of the plant Arabidopsis thaliana.</title>
        <authorList>
            <person name="Salanoubat M."/>
            <person name="Lemcke K."/>
            <person name="Rieger M."/>
            <person name="Ansorge W."/>
            <person name="Unseld M."/>
            <person name="Fartmann B."/>
            <person name="Valle G."/>
            <person name="Bloecker H."/>
            <person name="Perez-Alonso M."/>
            <person name="Obermaier B."/>
            <person name="Delseny M."/>
            <person name="Boutry M."/>
            <person name="Grivell L.A."/>
            <person name="Mache R."/>
            <person name="Puigdomenech P."/>
            <person name="De Simone V."/>
            <person name="Choisne N."/>
            <person name="Artiguenave F."/>
            <person name="Robert C."/>
            <person name="Brottier P."/>
            <person name="Wincker P."/>
            <person name="Cattolico L."/>
            <person name="Weissenbach J."/>
            <person name="Saurin W."/>
            <person name="Quetier F."/>
            <person name="Schaefer M."/>
            <person name="Mueller-Auer S."/>
            <person name="Gabel C."/>
            <person name="Fuchs M."/>
            <person name="Benes V."/>
            <person name="Wurmbach E."/>
            <person name="Drzonek H."/>
            <person name="Erfle H."/>
            <person name="Jordan N."/>
            <person name="Bangert S."/>
            <person name="Wiedelmann R."/>
            <person name="Kranz H."/>
            <person name="Voss H."/>
            <person name="Holland R."/>
            <person name="Brandt P."/>
            <person name="Nyakatura G."/>
            <person name="Vezzi A."/>
            <person name="D'Angelo M."/>
            <person name="Pallavicini A."/>
            <person name="Toppo S."/>
            <person name="Simionati B."/>
            <person name="Conrad A."/>
            <person name="Hornischer K."/>
            <person name="Kauer G."/>
            <person name="Loehnert T.-H."/>
            <person name="Nordsiek G."/>
            <person name="Reichelt J."/>
            <person name="Scharfe M."/>
            <person name="Schoen O."/>
            <person name="Bargues M."/>
            <person name="Terol J."/>
            <person name="Climent J."/>
            <person name="Navarro P."/>
            <person name="Collado C."/>
            <person name="Perez-Perez A."/>
            <person name="Ottenwaelder B."/>
            <person name="Duchemin D."/>
            <person name="Cooke R."/>
            <person name="Laudie M."/>
            <person name="Berger-Llauro C."/>
            <person name="Purnelle B."/>
            <person name="Masuy D."/>
            <person name="de Haan M."/>
            <person name="Maarse A.C."/>
            <person name="Alcaraz J.-P."/>
            <person name="Cottet A."/>
            <person name="Casacuberta E."/>
            <person name="Monfort A."/>
            <person name="Argiriou A."/>
            <person name="Flores M."/>
            <person name="Liguori R."/>
            <person name="Vitale D."/>
            <person name="Mannhaupt G."/>
            <person name="Haase D."/>
            <person name="Schoof H."/>
            <person name="Rudd S."/>
            <person name="Zaccaria P."/>
            <person name="Mewes H.-W."/>
            <person name="Mayer K.F.X."/>
            <person name="Kaul S."/>
            <person name="Town C.D."/>
            <person name="Koo H.L."/>
            <person name="Tallon L.J."/>
            <person name="Jenkins J."/>
            <person name="Rooney T."/>
            <person name="Rizzo M."/>
            <person name="Walts A."/>
            <person name="Utterback T."/>
            <person name="Fujii C.Y."/>
            <person name="Shea T.P."/>
            <person name="Creasy T.H."/>
            <person name="Haas B."/>
            <person name="Maiti R."/>
            <person name="Wu D."/>
            <person name="Peterson J."/>
            <person name="Van Aken S."/>
            <person name="Pai G."/>
            <person name="Militscher J."/>
            <person name="Sellers P."/>
            <person name="Gill J.E."/>
            <person name="Feldblyum T.V."/>
            <person name="Preuss D."/>
            <person name="Lin X."/>
            <person name="Nierman W.C."/>
            <person name="Salzberg S.L."/>
            <person name="White O."/>
            <person name="Venter J.C."/>
            <person name="Fraser C.M."/>
            <person name="Kaneko T."/>
            <person name="Nakamura Y."/>
            <person name="Sato S."/>
            <person name="Kato T."/>
            <person name="Asamizu E."/>
            <person name="Sasamoto S."/>
            <person name="Kimura T."/>
            <person name="Idesawa K."/>
            <person name="Kawashima K."/>
            <person name="Kishida Y."/>
            <person name="Kiyokawa C."/>
            <person name="Kohara M."/>
            <person name="Matsumoto M."/>
            <person name="Matsuno A."/>
            <person name="Muraki A."/>
            <person name="Nakayama S."/>
            <person name="Nakazaki N."/>
            <person name="Shinpo S."/>
            <person name="Takeuchi C."/>
            <person name="Wada T."/>
            <person name="Watanabe A."/>
            <person name="Yamada M."/>
            <person name="Yasuda M."/>
            <person name="Tabata S."/>
        </authorList>
    </citation>
    <scope>NUCLEOTIDE SEQUENCE [LARGE SCALE GENOMIC DNA]</scope>
    <source>
        <strain>cv. Columbia</strain>
    </source>
</reference>
<reference key="2">
    <citation type="journal article" date="2017" name="Plant J.">
        <title>Araport11: a complete reannotation of the Arabidopsis thaliana reference genome.</title>
        <authorList>
            <person name="Cheng C.Y."/>
            <person name="Krishnakumar V."/>
            <person name="Chan A.P."/>
            <person name="Thibaud-Nissen F."/>
            <person name="Schobel S."/>
            <person name="Town C.D."/>
        </authorList>
    </citation>
    <scope>GENOME REANNOTATION</scope>
    <source>
        <strain>cv. Columbia</strain>
    </source>
</reference>
<reference key="3">
    <citation type="journal article" date="2003" name="Science">
        <title>Empirical analysis of transcriptional activity in the Arabidopsis genome.</title>
        <authorList>
            <person name="Yamada K."/>
            <person name="Lim J."/>
            <person name="Dale J.M."/>
            <person name="Chen H."/>
            <person name="Shinn P."/>
            <person name="Palm C.J."/>
            <person name="Southwick A.M."/>
            <person name="Wu H.C."/>
            <person name="Kim C.J."/>
            <person name="Nguyen M."/>
            <person name="Pham P.K."/>
            <person name="Cheuk R.F."/>
            <person name="Karlin-Newmann G."/>
            <person name="Liu S.X."/>
            <person name="Lam B."/>
            <person name="Sakano H."/>
            <person name="Wu T."/>
            <person name="Yu G."/>
            <person name="Miranda M."/>
            <person name="Quach H.L."/>
            <person name="Tripp M."/>
            <person name="Chang C.H."/>
            <person name="Lee J.M."/>
            <person name="Toriumi M.J."/>
            <person name="Chan M.M."/>
            <person name="Tang C.C."/>
            <person name="Onodera C.S."/>
            <person name="Deng J.M."/>
            <person name="Akiyama K."/>
            <person name="Ansari Y."/>
            <person name="Arakawa T."/>
            <person name="Banh J."/>
            <person name="Banno F."/>
            <person name="Bowser L."/>
            <person name="Brooks S.Y."/>
            <person name="Carninci P."/>
            <person name="Chao Q."/>
            <person name="Choy N."/>
            <person name="Enju A."/>
            <person name="Goldsmith A.D."/>
            <person name="Gurjal M."/>
            <person name="Hansen N.F."/>
            <person name="Hayashizaki Y."/>
            <person name="Johnson-Hopson C."/>
            <person name="Hsuan V.W."/>
            <person name="Iida K."/>
            <person name="Karnes M."/>
            <person name="Khan S."/>
            <person name="Koesema E."/>
            <person name="Ishida J."/>
            <person name="Jiang P.X."/>
            <person name="Jones T."/>
            <person name="Kawai J."/>
            <person name="Kamiya A."/>
            <person name="Meyers C."/>
            <person name="Nakajima M."/>
            <person name="Narusaka M."/>
            <person name="Seki M."/>
            <person name="Sakurai T."/>
            <person name="Satou M."/>
            <person name="Tamse R."/>
            <person name="Vaysberg M."/>
            <person name="Wallender E.K."/>
            <person name="Wong C."/>
            <person name="Yamamura Y."/>
            <person name="Yuan S."/>
            <person name="Shinozaki K."/>
            <person name="Davis R.W."/>
            <person name="Theologis A."/>
            <person name="Ecker J.R."/>
        </authorList>
    </citation>
    <scope>NUCLEOTIDE SEQUENCE [LARGE SCALE MRNA]</scope>
    <source>
        <strain>cv. Columbia</strain>
    </source>
</reference>
<reference key="4">
    <citation type="submission" date="2006-07" db="EMBL/GenBank/DDBJ databases">
        <title>Large-scale analysis of RIKEN Arabidopsis full-length (RAFL) cDNAs.</title>
        <authorList>
            <person name="Totoki Y."/>
            <person name="Seki M."/>
            <person name="Ishida J."/>
            <person name="Nakajima M."/>
            <person name="Enju A."/>
            <person name="Kamiya A."/>
            <person name="Narusaka M."/>
            <person name="Shin-i T."/>
            <person name="Nakagawa M."/>
            <person name="Sakamoto N."/>
            <person name="Oishi K."/>
            <person name="Kohara Y."/>
            <person name="Kobayashi M."/>
            <person name="Toyoda A."/>
            <person name="Sakaki Y."/>
            <person name="Sakurai T."/>
            <person name="Iida K."/>
            <person name="Akiyama K."/>
            <person name="Satou M."/>
            <person name="Toyoda T."/>
            <person name="Konagaya A."/>
            <person name="Carninci P."/>
            <person name="Kawai J."/>
            <person name="Hayashizaki Y."/>
            <person name="Shinozaki K."/>
        </authorList>
    </citation>
    <scope>NUCLEOTIDE SEQUENCE [LARGE SCALE MRNA]</scope>
    <source>
        <strain>cv. Columbia</strain>
    </source>
</reference>
<reference key="5">
    <citation type="journal article" date="2003" name="New Phytol.">
        <title>Calmodulins and related potential calcium sensors of Arabidopsis.</title>
        <authorList>
            <person name="McCormack E."/>
            <person name="Braam J."/>
        </authorList>
    </citation>
    <scope>GENE FAMILY</scope>
    <scope>NOMENCLATURE</scope>
</reference>
<protein>
    <recommendedName>
        <fullName>Probable calcium-binding protein CML36</fullName>
    </recommendedName>
    <alternativeName>
        <fullName>Calmodulin-like protein 36</fullName>
    </alternativeName>
</protein>
<sequence>MKLAKLIPKRFFIRSKDRSTVSKSPTAFSFGSASSSSGQDCKNSGGDGGGGSVTPTSILPEVPSPYSYVEILQAFKLIDRDNDGAVSRHDLESLLSRLGPDPLTEEEINVMLKEVDCDGDGTIRLEELASRVVSLDPARDSTELKETFEFFDADRDGLISADELLRVFSTIGDERCTLDDCKRMIADVDEDGDGFVCFTEFSRMMDLQR</sequence>
<proteinExistence type="evidence at transcript level"/>
<comment type="function">
    <text evidence="1">Potential calcium sensor.</text>
</comment>
<comment type="caution">
    <text evidence="4">Although assigned as a calmodulin family member by Ref.5, it only contains EF-hand domains.</text>
</comment>
<dbReference type="EMBL" id="AC009400">
    <property type="protein sequence ID" value="AAF02827.1"/>
    <property type="molecule type" value="Genomic_DNA"/>
</dbReference>
<dbReference type="EMBL" id="CP002686">
    <property type="protein sequence ID" value="AEE74869.1"/>
    <property type="molecule type" value="Genomic_DNA"/>
</dbReference>
<dbReference type="EMBL" id="BT003114">
    <property type="protein sequence ID" value="AAO24546.1"/>
    <property type="molecule type" value="mRNA"/>
</dbReference>
<dbReference type="EMBL" id="AK228130">
    <property type="protein sequence ID" value="BAF00087.1"/>
    <property type="molecule type" value="mRNA"/>
</dbReference>
<dbReference type="RefSeq" id="NP_187630.1">
    <property type="nucleotide sequence ID" value="NM_111854.5"/>
</dbReference>
<dbReference type="SMR" id="Q9SS31"/>
<dbReference type="BioGRID" id="5515">
    <property type="interactions" value="1"/>
</dbReference>
<dbReference type="FunCoup" id="Q9SS31">
    <property type="interactions" value="224"/>
</dbReference>
<dbReference type="STRING" id="3702.Q9SS31"/>
<dbReference type="iPTMnet" id="Q9SS31"/>
<dbReference type="PaxDb" id="3702-AT3G10190.1"/>
<dbReference type="ProteomicsDB" id="241049"/>
<dbReference type="DNASU" id="820181"/>
<dbReference type="EnsemblPlants" id="AT3G10190.1">
    <property type="protein sequence ID" value="AT3G10190.1"/>
    <property type="gene ID" value="AT3G10190"/>
</dbReference>
<dbReference type="GeneID" id="820181"/>
<dbReference type="Gramene" id="AT3G10190.1">
    <property type="protein sequence ID" value="AT3G10190.1"/>
    <property type="gene ID" value="AT3G10190"/>
</dbReference>
<dbReference type="KEGG" id="ath:AT3G10190"/>
<dbReference type="Araport" id="AT3G10190"/>
<dbReference type="TAIR" id="AT3G10190">
    <property type="gene designation" value="CML36"/>
</dbReference>
<dbReference type="eggNOG" id="KOG0027">
    <property type="taxonomic scope" value="Eukaryota"/>
</dbReference>
<dbReference type="HOGENOM" id="CLU_061288_20_4_1"/>
<dbReference type="InParanoid" id="Q9SS31"/>
<dbReference type="OMA" id="LNPKRFF"/>
<dbReference type="PhylomeDB" id="Q9SS31"/>
<dbReference type="PRO" id="PR:Q9SS31"/>
<dbReference type="Proteomes" id="UP000006548">
    <property type="component" value="Chromosome 3"/>
</dbReference>
<dbReference type="ExpressionAtlas" id="Q9SS31">
    <property type="expression patterns" value="baseline and differential"/>
</dbReference>
<dbReference type="GO" id="GO:0005509">
    <property type="term" value="F:calcium ion binding"/>
    <property type="evidence" value="ECO:0007669"/>
    <property type="project" value="InterPro"/>
</dbReference>
<dbReference type="GO" id="GO:0050832">
    <property type="term" value="P:defense response to fungus"/>
    <property type="evidence" value="ECO:0000315"/>
    <property type="project" value="TAIR"/>
</dbReference>
<dbReference type="CDD" id="cd00051">
    <property type="entry name" value="EFh"/>
    <property type="match status" value="2"/>
</dbReference>
<dbReference type="FunFam" id="1.10.238.10:FF:000338">
    <property type="entry name" value="Probable calcium-binding protein CML35"/>
    <property type="match status" value="1"/>
</dbReference>
<dbReference type="FunFam" id="1.10.238.10:FF:000508">
    <property type="entry name" value="Probable calcium-binding protein CML35"/>
    <property type="match status" value="1"/>
</dbReference>
<dbReference type="Gene3D" id="1.10.238.10">
    <property type="entry name" value="EF-hand"/>
    <property type="match status" value="2"/>
</dbReference>
<dbReference type="InterPro" id="IPR011992">
    <property type="entry name" value="EF-hand-dom_pair"/>
</dbReference>
<dbReference type="InterPro" id="IPR018247">
    <property type="entry name" value="EF_Hand_1_Ca_BS"/>
</dbReference>
<dbReference type="InterPro" id="IPR002048">
    <property type="entry name" value="EF_hand_dom"/>
</dbReference>
<dbReference type="InterPro" id="IPR039647">
    <property type="entry name" value="EF_hand_pair_protein_CML-like"/>
</dbReference>
<dbReference type="PANTHER" id="PTHR10891">
    <property type="entry name" value="EF-HAND CALCIUM-BINDING DOMAIN CONTAINING PROTEIN"/>
    <property type="match status" value="1"/>
</dbReference>
<dbReference type="Pfam" id="PF13499">
    <property type="entry name" value="EF-hand_7"/>
    <property type="match status" value="2"/>
</dbReference>
<dbReference type="SMART" id="SM00054">
    <property type="entry name" value="EFh"/>
    <property type="match status" value="4"/>
</dbReference>
<dbReference type="SUPFAM" id="SSF47473">
    <property type="entry name" value="EF-hand"/>
    <property type="match status" value="1"/>
</dbReference>
<dbReference type="PROSITE" id="PS00018">
    <property type="entry name" value="EF_HAND_1"/>
    <property type="match status" value="3"/>
</dbReference>
<dbReference type="PROSITE" id="PS50222">
    <property type="entry name" value="EF_HAND_2"/>
    <property type="match status" value="4"/>
</dbReference>
<organism>
    <name type="scientific">Arabidopsis thaliana</name>
    <name type="common">Mouse-ear cress</name>
    <dbReference type="NCBI Taxonomy" id="3702"/>
    <lineage>
        <taxon>Eukaryota</taxon>
        <taxon>Viridiplantae</taxon>
        <taxon>Streptophyta</taxon>
        <taxon>Embryophyta</taxon>
        <taxon>Tracheophyta</taxon>
        <taxon>Spermatophyta</taxon>
        <taxon>Magnoliopsida</taxon>
        <taxon>eudicotyledons</taxon>
        <taxon>Gunneridae</taxon>
        <taxon>Pentapetalae</taxon>
        <taxon>rosids</taxon>
        <taxon>malvids</taxon>
        <taxon>Brassicales</taxon>
        <taxon>Brassicaceae</taxon>
        <taxon>Camelineae</taxon>
        <taxon>Arabidopsis</taxon>
    </lineage>
</organism>
<evidence type="ECO:0000250" key="1"/>
<evidence type="ECO:0000255" key="2">
    <source>
        <dbReference type="PROSITE-ProRule" id="PRU00448"/>
    </source>
</evidence>
<evidence type="ECO:0000256" key="3">
    <source>
        <dbReference type="SAM" id="MobiDB-lite"/>
    </source>
</evidence>
<evidence type="ECO:0000305" key="4"/>
<accession>Q9SS31</accession>
<feature type="chain" id="PRO_0000342960" description="Probable calcium-binding protein CML36">
    <location>
        <begin position="1"/>
        <end position="209"/>
    </location>
</feature>
<feature type="domain" description="EF-hand 1" evidence="2">
    <location>
        <begin position="66"/>
        <end position="101"/>
    </location>
</feature>
<feature type="domain" description="EF-hand 2" evidence="2">
    <location>
        <begin position="103"/>
        <end position="138"/>
    </location>
</feature>
<feature type="domain" description="EF-hand 3" evidence="2">
    <location>
        <begin position="139"/>
        <end position="174"/>
    </location>
</feature>
<feature type="domain" description="EF-hand 4" evidence="2">
    <location>
        <begin position="176"/>
        <end position="209"/>
    </location>
</feature>
<feature type="region of interest" description="Disordered" evidence="3">
    <location>
        <begin position="22"/>
        <end position="59"/>
    </location>
</feature>
<feature type="compositionally biased region" description="Low complexity" evidence="3">
    <location>
        <begin position="27"/>
        <end position="38"/>
    </location>
</feature>
<feature type="binding site" evidence="2">
    <location>
        <position position="79"/>
    </location>
    <ligand>
        <name>Ca(2+)</name>
        <dbReference type="ChEBI" id="CHEBI:29108"/>
        <label>1</label>
    </ligand>
</feature>
<feature type="binding site" evidence="2">
    <location>
        <position position="81"/>
    </location>
    <ligand>
        <name>Ca(2+)</name>
        <dbReference type="ChEBI" id="CHEBI:29108"/>
        <label>1</label>
    </ligand>
</feature>
<feature type="binding site" evidence="2">
    <location>
        <position position="83"/>
    </location>
    <ligand>
        <name>Ca(2+)</name>
        <dbReference type="ChEBI" id="CHEBI:29108"/>
        <label>1</label>
    </ligand>
</feature>
<feature type="binding site" evidence="2">
    <location>
        <position position="90"/>
    </location>
    <ligand>
        <name>Ca(2+)</name>
        <dbReference type="ChEBI" id="CHEBI:29108"/>
        <label>1</label>
    </ligand>
</feature>
<feature type="binding site" evidence="2">
    <location>
        <position position="152"/>
    </location>
    <ligand>
        <name>Ca(2+)</name>
        <dbReference type="ChEBI" id="CHEBI:29108"/>
        <label>2</label>
    </ligand>
</feature>
<feature type="binding site" evidence="2">
    <location>
        <position position="154"/>
    </location>
    <ligand>
        <name>Ca(2+)</name>
        <dbReference type="ChEBI" id="CHEBI:29108"/>
        <label>2</label>
    </ligand>
</feature>
<feature type="binding site" evidence="2">
    <location>
        <position position="156"/>
    </location>
    <ligand>
        <name>Ca(2+)</name>
        <dbReference type="ChEBI" id="CHEBI:29108"/>
        <label>2</label>
    </ligand>
</feature>
<feature type="binding site" evidence="2">
    <location>
        <position position="163"/>
    </location>
    <ligand>
        <name>Ca(2+)</name>
        <dbReference type="ChEBI" id="CHEBI:29108"/>
        <label>2</label>
    </ligand>
</feature>
<feature type="binding site" evidence="2">
    <location>
        <position position="189"/>
    </location>
    <ligand>
        <name>Ca(2+)</name>
        <dbReference type="ChEBI" id="CHEBI:29108"/>
        <label>3</label>
    </ligand>
</feature>
<feature type="binding site" evidence="2">
    <location>
        <position position="191"/>
    </location>
    <ligand>
        <name>Ca(2+)</name>
        <dbReference type="ChEBI" id="CHEBI:29108"/>
        <label>3</label>
    </ligand>
</feature>
<feature type="binding site" evidence="2">
    <location>
        <position position="193"/>
    </location>
    <ligand>
        <name>Ca(2+)</name>
        <dbReference type="ChEBI" id="CHEBI:29108"/>
        <label>3</label>
    </ligand>
</feature>
<feature type="binding site" evidence="2">
    <location>
        <position position="200"/>
    </location>
    <ligand>
        <name>Ca(2+)</name>
        <dbReference type="ChEBI" id="CHEBI:29108"/>
        <label>3</label>
    </ligand>
</feature>
<name>CML36_ARATH</name>
<gene>
    <name type="primary">CML36</name>
    <name type="ordered locus">At3g10190</name>
    <name type="ORF">F14P13.21</name>
</gene>
<keyword id="KW-0106">Calcium</keyword>
<keyword id="KW-0479">Metal-binding</keyword>
<keyword id="KW-1185">Reference proteome</keyword>
<keyword id="KW-0677">Repeat</keyword>